<sequence length="716" mass="82918">MEDFVRQCFNPMIVELAEKAMKEYGEDLKIETNKFAAICTHLEVCFMYSDFHFINEQGESIVVELDDPNALLKHRFEIIEGRDRTMAWTVVNSICNTTGAEKPKFLPDLYDYKENRFIEIGVTRREVHIYYLEKANKIKSENTHIHIFSFTGEEMATKADYTLDEESRARIKTRLFTIRQEMANRGLWDSFRQSERGEETIEERFEITGTMRRLADQSLPPNFSCLENFRAYVDGFEPNGCIEGKLSQMSKEVNARIEPFLKTTPRPIRLPDGPPCFQRSKFLLMDALKLSIEDPSHEGEGIPLYDAIKCMRTFFGWKEPYIVKPHEKGINPNYLLSWKQVLAELQDIENEEKIPRTKNMKKTSQLKWALGENMAPEKVDFDNCRDISDLKQYDSDEPELRSLSSWIQNEFNKACELTDSIWIELDEIGEDVAPIEYIASMRRNYFTAEVSHCRATEYIMKGVYINTALLNASCAAMDDFQLIPMISKCRTKEGRRKTNLYGFIIKGRSHLRNDTDVVNFVSMEFSLTDPRLEPHKWEKYCVLEIGDMLIRSAIGQMSRPMFLYVRTNGTSKIKMKWGMEMRRCLLQSLQQIESMIEAESSVKEKDMTKDFFENKSETWPIGESPKGVEEGSIGKVCRTLLAKSVFNSLYASPQLEGFSAESRKLLLVVQALRDNLEPGTFDLGGLYEAIEECLINDPWVLLNASWFNSFLTHALR</sequence>
<accession>Q3YPY8</accession>
<comment type="function">
    <text evidence="2">Plays an essential role in viral RNA transcription and replication by forming the heterotrimeric polymerase complex together with PB1 and PB2 subunits. The complex transcribes viral mRNAs by using a unique mechanism called cap-snatching. It consists in the hijacking and cleavage of host capped pre-mRNAs. These short capped RNAs are then used as primers for viral mRNAs. The PB2 subunit is responsible for the binding of the 5' cap of cellular pre-mRNAs which are subsequently cleaved after 10-13 nucleotides by the PA subunit that carries the endonuclease activity.</text>
</comment>
<comment type="cofactor">
    <cofactor evidence="2">
        <name>Mn(2+)</name>
        <dbReference type="ChEBI" id="CHEBI:29035"/>
    </cofactor>
    <text evidence="2">Binds 2 manganese ions per subunit.</text>
</comment>
<comment type="subunit">
    <text evidence="1 2">Influenza RNA polymerase is composed of three subunits: PB1, PB2 and PA. Interacts (via C-terminus) with PB1 (via N-terminus).</text>
</comment>
<comment type="subcellular location">
    <subcellularLocation>
        <location evidence="2">Host cytoplasm</location>
    </subcellularLocation>
    <subcellularLocation>
        <location evidence="2">Host nucleus</location>
    </subcellularLocation>
    <text evidence="1 2">PB1 and PA are transported in the host nucleus as a complex.</text>
</comment>
<comment type="alternative products">
    <event type="ribosomal frameshifting"/>
    <isoform>
        <id>Q3YPY8-1</id>
        <name>PA</name>
        <sequence type="displayed"/>
    </isoform>
    <isoform>
        <id>P0DJS9-1</id>
        <name>PA-X</name>
        <sequence type="external"/>
    </isoform>
</comment>
<comment type="PTM">
    <text evidence="1 2">Phosphorylated on serines and threonines by host kinases, including human casein kinase II.</text>
</comment>
<comment type="similarity">
    <text evidence="2">Belongs to the influenza viruses PA family.</text>
</comment>
<proteinExistence type="inferred from homology"/>
<gene>
    <name evidence="2" type="primary">PA</name>
</gene>
<keyword id="KW-1157">Cap snatching</keyword>
<keyword id="KW-0255">Endonuclease</keyword>
<keyword id="KW-1262">Eukaryotic host gene expression shutoff by virus</keyword>
<keyword id="KW-1191">Eukaryotic host transcription shutoff by virus</keyword>
<keyword id="KW-1035">Host cytoplasm</keyword>
<keyword id="KW-1190">Host gene expression shutoff by virus</keyword>
<keyword id="KW-1048">Host nucleus</keyword>
<keyword id="KW-0945">Host-virus interaction</keyword>
<keyword id="KW-0378">Hydrolase</keyword>
<keyword id="KW-1104">Inhibition of host RNA polymerase II by virus</keyword>
<keyword id="KW-0464">Manganese</keyword>
<keyword id="KW-0479">Metal-binding</keyword>
<keyword id="KW-0540">Nuclease</keyword>
<keyword id="KW-0597">Phosphoprotein</keyword>
<keyword id="KW-0688">Ribosomal frameshifting</keyword>
<protein>
    <recommendedName>
        <fullName evidence="2">Polymerase acidic protein</fullName>
        <ecNumber evidence="2">3.1.-.-</ecNumber>
    </recommendedName>
    <alternativeName>
        <fullName evidence="2">RNA-directed RNA polymerase subunit P2</fullName>
    </alternativeName>
</protein>
<evidence type="ECO:0000250" key="1">
    <source>
        <dbReference type="UniProtKB" id="P03433"/>
    </source>
</evidence>
<evidence type="ECO:0000255" key="2">
    <source>
        <dbReference type="HAMAP-Rule" id="MF_04063"/>
    </source>
</evidence>
<dbReference type="EC" id="3.1.-.-" evidence="2"/>
<dbReference type="EMBL" id="CY002501">
    <property type="protein sequence ID" value="AAZ80014.1"/>
    <property type="molecule type" value="Genomic_RNA"/>
</dbReference>
<dbReference type="SMR" id="Q3YPY8"/>
<dbReference type="MEROPS" id="S62.001"/>
<dbReference type="Proteomes" id="UP000154307">
    <property type="component" value="Genome"/>
</dbReference>
<dbReference type="GO" id="GO:0030430">
    <property type="term" value="C:host cell cytoplasm"/>
    <property type="evidence" value="ECO:0007669"/>
    <property type="project" value="UniProtKB-SubCell"/>
</dbReference>
<dbReference type="GO" id="GO:0042025">
    <property type="term" value="C:host cell nucleus"/>
    <property type="evidence" value="ECO:0007669"/>
    <property type="project" value="UniProtKB-SubCell"/>
</dbReference>
<dbReference type="GO" id="GO:0004519">
    <property type="term" value="F:endonuclease activity"/>
    <property type="evidence" value="ECO:0007669"/>
    <property type="project" value="UniProtKB-KW"/>
</dbReference>
<dbReference type="GO" id="GO:0046872">
    <property type="term" value="F:metal ion binding"/>
    <property type="evidence" value="ECO:0007669"/>
    <property type="project" value="UniProtKB-KW"/>
</dbReference>
<dbReference type="GO" id="GO:0003723">
    <property type="term" value="F:RNA binding"/>
    <property type="evidence" value="ECO:0007669"/>
    <property type="project" value="UniProtKB-UniRule"/>
</dbReference>
<dbReference type="GO" id="GO:0075526">
    <property type="term" value="P:cap snatching"/>
    <property type="evidence" value="ECO:0007669"/>
    <property type="project" value="UniProtKB-UniRule"/>
</dbReference>
<dbReference type="GO" id="GO:0006351">
    <property type="term" value="P:DNA-templated transcription"/>
    <property type="evidence" value="ECO:0007669"/>
    <property type="project" value="UniProtKB-UniRule"/>
</dbReference>
<dbReference type="GO" id="GO:0039657">
    <property type="term" value="P:symbiont-mediated suppression of host gene expression"/>
    <property type="evidence" value="ECO:0007669"/>
    <property type="project" value="UniProtKB-KW"/>
</dbReference>
<dbReference type="GO" id="GO:0039523">
    <property type="term" value="P:symbiont-mediated suppression of host mRNA transcription via inhibition of RNA polymerase II activity"/>
    <property type="evidence" value="ECO:0007669"/>
    <property type="project" value="UniProtKB-UniRule"/>
</dbReference>
<dbReference type="GO" id="GO:0039694">
    <property type="term" value="P:viral RNA genome replication"/>
    <property type="evidence" value="ECO:0007669"/>
    <property type="project" value="InterPro"/>
</dbReference>
<dbReference type="GO" id="GO:0075523">
    <property type="term" value="P:viral translational frameshifting"/>
    <property type="evidence" value="ECO:0007669"/>
    <property type="project" value="UniProtKB-KW"/>
</dbReference>
<dbReference type="FunFam" id="3.40.91.90:FF:000001">
    <property type="entry name" value="Polymerase acidic protein"/>
    <property type="match status" value="1"/>
</dbReference>
<dbReference type="Gene3D" id="3.40.91.90">
    <property type="entry name" value="Influenza RNA-dependent RNA polymerase subunit PA, endonuclease domain"/>
    <property type="match status" value="1"/>
</dbReference>
<dbReference type="HAMAP" id="MF_04063">
    <property type="entry name" value="INFV_PA"/>
    <property type="match status" value="1"/>
</dbReference>
<dbReference type="InterPro" id="IPR037534">
    <property type="entry name" value="INFV_PA"/>
</dbReference>
<dbReference type="InterPro" id="IPR001009">
    <property type="entry name" value="PA/PA-X"/>
</dbReference>
<dbReference type="InterPro" id="IPR038372">
    <property type="entry name" value="PA/PA-X_sf"/>
</dbReference>
<dbReference type="Pfam" id="PF00603">
    <property type="entry name" value="Flu_PA"/>
    <property type="match status" value="1"/>
</dbReference>
<name>PA_I71A1</name>
<reference key="1">
    <citation type="submission" date="2005-08" db="EMBL/GenBank/DDBJ databases">
        <title>The NIAID influenza genome sequencing project.</title>
        <authorList>
            <person name="Ghedin E."/>
            <person name="Spiro D."/>
            <person name="Miller N."/>
            <person name="Zaborsky J."/>
            <person name="Feldblyum T."/>
            <person name="Subbu V."/>
            <person name="Shumway M."/>
            <person name="Sparenborg J."/>
            <person name="Groveman L."/>
            <person name="Halpin R."/>
            <person name="Sitz J."/>
            <person name="Koo H."/>
            <person name="Salzberg S.L."/>
            <person name="Webster R.G."/>
            <person name="Hoffmann E."/>
            <person name="Krauss S."/>
            <person name="Naeve C."/>
            <person name="Bao Y."/>
            <person name="Bolotov P."/>
            <person name="Dernovoy D."/>
            <person name="Kiryutin B."/>
            <person name="Lipman D.J."/>
            <person name="Tatusova T."/>
        </authorList>
    </citation>
    <scope>NUCLEOTIDE SEQUENCE [GENOMIC RNA]</scope>
</reference>
<organismHost>
    <name type="scientific">Aves</name>
    <dbReference type="NCBI Taxonomy" id="8782"/>
</organismHost>
<organismHost>
    <name type="scientific">Cetacea</name>
    <name type="common">whales</name>
    <dbReference type="NCBI Taxonomy" id="9721"/>
</organismHost>
<organismHost>
    <name type="scientific">Homo sapiens</name>
    <name type="common">Human</name>
    <dbReference type="NCBI Taxonomy" id="9606"/>
</organismHost>
<organismHost>
    <name type="scientific">Phocidae</name>
    <name type="common">true seals</name>
    <dbReference type="NCBI Taxonomy" id="9709"/>
</organismHost>
<organismHost>
    <name type="scientific">Sus scrofa</name>
    <name type="common">Pig</name>
    <dbReference type="NCBI Taxonomy" id="9823"/>
</organismHost>
<organism>
    <name type="scientific">Influenza A virus (strain A/Memphis/1/1971 H3N2)</name>
    <dbReference type="NCBI Taxonomy" id="383586"/>
    <lineage>
        <taxon>Viruses</taxon>
        <taxon>Riboviria</taxon>
        <taxon>Orthornavirae</taxon>
        <taxon>Negarnaviricota</taxon>
        <taxon>Polyploviricotina</taxon>
        <taxon>Insthoviricetes</taxon>
        <taxon>Articulavirales</taxon>
        <taxon>Orthomyxoviridae</taxon>
        <taxon>Alphainfluenzavirus</taxon>
        <taxon>Alphainfluenzavirus influenzae</taxon>
        <taxon>Influenza A virus</taxon>
    </lineage>
</organism>
<feature type="chain" id="PRO_0000279252" description="Polymerase acidic protein">
    <location>
        <begin position="1"/>
        <end position="716"/>
    </location>
</feature>
<feature type="short sequence motif" description="Nuclear localization signal 1 (NLS1)" evidence="1 2">
    <location>
        <begin position="124"/>
        <end position="139"/>
    </location>
</feature>
<feature type="short sequence motif" description="Nuclear localization signal 2 (NLS2)" evidence="1 2">
    <location>
        <begin position="184"/>
        <end position="247"/>
    </location>
</feature>
<feature type="binding site" evidence="2">
    <location>
        <position position="41"/>
    </location>
    <ligand>
        <name>Mn(2+)</name>
        <dbReference type="ChEBI" id="CHEBI:29035"/>
        <label>1</label>
    </ligand>
</feature>
<feature type="binding site" evidence="2">
    <location>
        <position position="80"/>
    </location>
    <ligand>
        <name>Mn(2+)</name>
        <dbReference type="ChEBI" id="CHEBI:29035"/>
        <label>2</label>
    </ligand>
</feature>
<feature type="binding site" evidence="2">
    <location>
        <position position="108"/>
    </location>
    <ligand>
        <name>Mn(2+)</name>
        <dbReference type="ChEBI" id="CHEBI:29035"/>
        <label>1</label>
    </ligand>
</feature>
<feature type="binding site" evidence="2">
    <location>
        <position position="108"/>
    </location>
    <ligand>
        <name>Mn(2+)</name>
        <dbReference type="ChEBI" id="CHEBI:29035"/>
        <label>2</label>
    </ligand>
</feature>
<feature type="binding site" evidence="2">
    <location>
        <position position="119"/>
    </location>
    <ligand>
        <name>Mn(2+)</name>
        <dbReference type="ChEBI" id="CHEBI:29035"/>
        <label>1</label>
    </ligand>
</feature>
<feature type="binding site" evidence="2">
    <location>
        <position position="120"/>
    </location>
    <ligand>
        <name>Mn(2+)</name>
        <dbReference type="ChEBI" id="CHEBI:29035"/>
        <label>1</label>
    </ligand>
</feature>